<protein>
    <recommendedName>
        <fullName>5-hydroxytryptamine receptor 2A</fullName>
        <shortName>5-HT-2</shortName>
        <shortName>5-HT-2A</shortName>
        <shortName>5-HT2A</shortName>
    </recommendedName>
    <alternativeName>
        <fullName>Serotonin receptor 2A</fullName>
    </alternativeName>
</protein>
<organism>
    <name type="scientific">Sus scrofa</name>
    <name type="common">Pig</name>
    <dbReference type="NCBI Taxonomy" id="9823"/>
    <lineage>
        <taxon>Eukaryota</taxon>
        <taxon>Metazoa</taxon>
        <taxon>Chordata</taxon>
        <taxon>Craniata</taxon>
        <taxon>Vertebrata</taxon>
        <taxon>Euteleostomi</taxon>
        <taxon>Mammalia</taxon>
        <taxon>Eutheria</taxon>
        <taxon>Laurasiatheria</taxon>
        <taxon>Artiodactyla</taxon>
        <taxon>Suina</taxon>
        <taxon>Suidae</taxon>
        <taxon>Sus</taxon>
    </lineage>
</organism>
<keyword id="KW-0085">Behavior</keyword>
<keyword id="KW-1003">Cell membrane</keyword>
<keyword id="KW-0966">Cell projection</keyword>
<keyword id="KW-0968">Cytoplasmic vesicle</keyword>
<keyword id="KW-1015">Disulfide bond</keyword>
<keyword id="KW-0297">G-protein coupled receptor</keyword>
<keyword id="KW-0325">Glycoprotein</keyword>
<keyword id="KW-0472">Membrane</keyword>
<keyword id="KW-0597">Phosphoprotein</keyword>
<keyword id="KW-0675">Receptor</keyword>
<keyword id="KW-1185">Reference proteome</keyword>
<keyword id="KW-0770">Synapse</keyword>
<keyword id="KW-0807">Transducer</keyword>
<keyword id="KW-0812">Transmembrane</keyword>
<keyword id="KW-1133">Transmembrane helix</keyword>
<proteinExistence type="evidence at transcript level"/>
<dbReference type="EMBL" id="S78208">
    <property type="protein sequence ID" value="AAB34690.1"/>
    <property type="molecule type" value="mRNA"/>
</dbReference>
<dbReference type="EMBL" id="Z48152">
    <property type="protein sequence ID" value="CAA88169.1"/>
    <property type="molecule type" value="mRNA"/>
</dbReference>
<dbReference type="PIR" id="S66489">
    <property type="entry name" value="S66489"/>
</dbReference>
<dbReference type="RefSeq" id="NP_999382.1">
    <property type="nucleotide sequence ID" value="NM_214217.1"/>
</dbReference>
<dbReference type="SMR" id="P50129"/>
<dbReference type="FunCoup" id="P50129">
    <property type="interactions" value="435"/>
</dbReference>
<dbReference type="STRING" id="9823.ENSSSCP00000032855"/>
<dbReference type="BindingDB" id="P50129"/>
<dbReference type="ChEMBL" id="CHEMBL2490"/>
<dbReference type="DrugCentral" id="P50129"/>
<dbReference type="GlyCosmos" id="P50129">
    <property type="glycosylation" value="6 sites, No reported glycans"/>
</dbReference>
<dbReference type="GlyGen" id="P50129">
    <property type="glycosylation" value="6 sites"/>
</dbReference>
<dbReference type="PaxDb" id="9823-ENSSSCP00000010037"/>
<dbReference type="GeneID" id="397432"/>
<dbReference type="KEGG" id="ssc:397432"/>
<dbReference type="CTD" id="3356"/>
<dbReference type="eggNOG" id="KOG3656">
    <property type="taxonomic scope" value="Eukaryota"/>
</dbReference>
<dbReference type="InParanoid" id="P50129"/>
<dbReference type="OrthoDB" id="420518at2759"/>
<dbReference type="PRO" id="PR:P50129"/>
<dbReference type="Proteomes" id="UP000008227">
    <property type="component" value="Unplaced"/>
</dbReference>
<dbReference type="Proteomes" id="UP000314985">
    <property type="component" value="Unplaced"/>
</dbReference>
<dbReference type="Proteomes" id="UP000694570">
    <property type="component" value="Unplaced"/>
</dbReference>
<dbReference type="Proteomes" id="UP000694571">
    <property type="component" value="Unplaced"/>
</dbReference>
<dbReference type="Proteomes" id="UP000694720">
    <property type="component" value="Unplaced"/>
</dbReference>
<dbReference type="Proteomes" id="UP000694722">
    <property type="component" value="Unplaced"/>
</dbReference>
<dbReference type="Proteomes" id="UP000694723">
    <property type="component" value="Unplaced"/>
</dbReference>
<dbReference type="Proteomes" id="UP000694724">
    <property type="component" value="Unplaced"/>
</dbReference>
<dbReference type="Proteomes" id="UP000694725">
    <property type="component" value="Unplaced"/>
</dbReference>
<dbReference type="Proteomes" id="UP000694726">
    <property type="component" value="Unplaced"/>
</dbReference>
<dbReference type="Proteomes" id="UP000694727">
    <property type="component" value="Unplaced"/>
</dbReference>
<dbReference type="Proteomes" id="UP000694728">
    <property type="component" value="Unplaced"/>
</dbReference>
<dbReference type="GO" id="GO:0030424">
    <property type="term" value="C:axon"/>
    <property type="evidence" value="ECO:0007669"/>
    <property type="project" value="UniProtKB-SubCell"/>
</dbReference>
<dbReference type="GO" id="GO:0005901">
    <property type="term" value="C:caveola"/>
    <property type="evidence" value="ECO:0007669"/>
    <property type="project" value="UniProtKB-SubCell"/>
</dbReference>
<dbReference type="GO" id="GO:0031410">
    <property type="term" value="C:cytoplasmic vesicle"/>
    <property type="evidence" value="ECO:0007669"/>
    <property type="project" value="UniProtKB-KW"/>
</dbReference>
<dbReference type="GO" id="GO:0030425">
    <property type="term" value="C:dendrite"/>
    <property type="evidence" value="ECO:0000318"/>
    <property type="project" value="GO_Central"/>
</dbReference>
<dbReference type="GO" id="GO:0005886">
    <property type="term" value="C:plasma membrane"/>
    <property type="evidence" value="ECO:0000318"/>
    <property type="project" value="GO_Central"/>
</dbReference>
<dbReference type="GO" id="GO:0098793">
    <property type="term" value="C:presynapse"/>
    <property type="evidence" value="ECO:0007669"/>
    <property type="project" value="UniProtKB-SubCell"/>
</dbReference>
<dbReference type="GO" id="GO:0004993">
    <property type="term" value="F:G protein-coupled serotonin receptor activity"/>
    <property type="evidence" value="ECO:0000318"/>
    <property type="project" value="GO_Central"/>
</dbReference>
<dbReference type="GO" id="GO:0030594">
    <property type="term" value="F:neurotransmitter receptor activity"/>
    <property type="evidence" value="ECO:0000318"/>
    <property type="project" value="GO_Central"/>
</dbReference>
<dbReference type="GO" id="GO:0007268">
    <property type="term" value="P:chemical synaptic transmission"/>
    <property type="evidence" value="ECO:0000318"/>
    <property type="project" value="GO_Central"/>
</dbReference>
<dbReference type="GO" id="GO:0007187">
    <property type="term" value="P:G protein-coupled receptor signaling pathway, coupled to cyclic nucleotide second messenger"/>
    <property type="evidence" value="ECO:0000318"/>
    <property type="project" value="GO_Central"/>
</dbReference>
<dbReference type="GO" id="GO:0007208">
    <property type="term" value="P:phospholipase C-activating serotonin receptor signaling pathway"/>
    <property type="evidence" value="ECO:0000318"/>
    <property type="project" value="GO_Central"/>
</dbReference>
<dbReference type="GO" id="GO:0051209">
    <property type="term" value="P:release of sequestered calcium ion into cytosol"/>
    <property type="evidence" value="ECO:0000318"/>
    <property type="project" value="GO_Central"/>
</dbReference>
<dbReference type="GO" id="GO:0009410">
    <property type="term" value="P:response to xenobiotic stimulus"/>
    <property type="evidence" value="ECO:0000318"/>
    <property type="project" value="GO_Central"/>
</dbReference>
<dbReference type="GO" id="GO:0007210">
    <property type="term" value="P:serotonin receptor signaling pathway"/>
    <property type="evidence" value="ECO:0000318"/>
    <property type="project" value="GO_Central"/>
</dbReference>
<dbReference type="CDD" id="cd15304">
    <property type="entry name" value="7tmA_5-HT2A"/>
    <property type="match status" value="1"/>
</dbReference>
<dbReference type="Gene3D" id="1.20.1070.10">
    <property type="entry name" value="Rhodopsin 7-helix transmembrane proteins"/>
    <property type="match status" value="1"/>
</dbReference>
<dbReference type="InterPro" id="IPR000455">
    <property type="entry name" value="5HT2A_rcpt"/>
</dbReference>
<dbReference type="InterPro" id="IPR002231">
    <property type="entry name" value="5HT_rcpt"/>
</dbReference>
<dbReference type="InterPro" id="IPR000276">
    <property type="entry name" value="GPCR_Rhodpsn"/>
</dbReference>
<dbReference type="InterPro" id="IPR017452">
    <property type="entry name" value="GPCR_Rhodpsn_7TM"/>
</dbReference>
<dbReference type="PANTHER" id="PTHR24247">
    <property type="entry name" value="5-HYDROXYTRYPTAMINE RECEPTOR"/>
    <property type="match status" value="1"/>
</dbReference>
<dbReference type="PANTHER" id="PTHR24247:SF30">
    <property type="entry name" value="5-HYDROXYTRYPTAMINE RECEPTOR 2A"/>
    <property type="match status" value="1"/>
</dbReference>
<dbReference type="Pfam" id="PF00001">
    <property type="entry name" value="7tm_1"/>
    <property type="match status" value="1"/>
</dbReference>
<dbReference type="PRINTS" id="PR00516">
    <property type="entry name" value="5HT2ARECEPTR"/>
</dbReference>
<dbReference type="PRINTS" id="PR01101">
    <property type="entry name" value="5HTRECEPTOR"/>
</dbReference>
<dbReference type="PRINTS" id="PR00237">
    <property type="entry name" value="GPCRRHODOPSN"/>
</dbReference>
<dbReference type="SMART" id="SM01381">
    <property type="entry name" value="7TM_GPCR_Srsx"/>
    <property type="match status" value="1"/>
</dbReference>
<dbReference type="SUPFAM" id="SSF81321">
    <property type="entry name" value="Family A G protein-coupled receptor-like"/>
    <property type="match status" value="1"/>
</dbReference>
<dbReference type="PROSITE" id="PS00237">
    <property type="entry name" value="G_PROTEIN_RECEP_F1_1"/>
    <property type="match status" value="1"/>
</dbReference>
<dbReference type="PROSITE" id="PS50262">
    <property type="entry name" value="G_PROTEIN_RECEP_F1_2"/>
    <property type="match status" value="1"/>
</dbReference>
<comment type="function">
    <text evidence="2 3">G-protein coupled receptor for 5-hydroxytryptamine (serotonin). Also functions as a receptor for various drugs and psychoactive substances, including mescaline, psilocybin, 1-(2,5-dimethoxy-4-iodophenyl)-2-aminopropane (DOI) and lysergic acid diethylamide (LSD). Ligand binding causes a conformation change that triggers signaling via guanine nucleotide-binding proteins (G proteins) and modulates the activity of downstream effectors. HTR2A is coupled to G(q)/G(11) G alpha proteins and activates phospholipase C-beta, releasing diacylglycerol (DAG) and inositol 1,4,5-trisphosphate (IP3) second messengers that modulate the activity of phosphatidylinositol 3-kinase and promote the release of Ca(2+) ions from intracellular stores, respectively. Beta-arrestin family members inhibit signaling via G proteins and mediate activation of alternative signaling pathways. Affects neural activity, perception, cognition and mood (By similarity). Plays a role in the regulation of behavior, including responses to anxiogenic situations and psychoactive substances. Plays a role in intestinal smooth muscle contraction, and may play a role in arterial vasoconstriction (By similarity).</text>
</comment>
<comment type="activity regulation">
    <text evidence="2">G-protein coupled receptor activity is regulated by lipids: oleamide increases HTR2A-mediated activity.</text>
</comment>
<comment type="subunit">
    <text evidence="2">Interacts (via C-terminus) with MPDZ and PATJ. May interact (via C-terminus) with MPP3, PRDX6, DLG4, DLG1, CASK, APBA1 and MAGI2. Interacts with GRM2 and DRD2; this may affect signaling.</text>
</comment>
<comment type="subcellular location">
    <subcellularLocation>
        <location evidence="2">Cell membrane</location>
        <topology evidence="2">Multi-pass membrane protein</topology>
    </subcellularLocation>
    <subcellularLocation>
        <location evidence="3">Cell projection</location>
        <location evidence="3">Dendrite</location>
    </subcellularLocation>
    <subcellularLocation>
        <location evidence="1">Cell projection</location>
        <location evidence="1">Axon</location>
    </subcellularLocation>
    <subcellularLocation>
        <location evidence="1">Cytoplasmic vesicle</location>
    </subcellularLocation>
    <subcellularLocation>
        <location evidence="1">Membrane</location>
        <location evidence="1">Caveola</location>
    </subcellularLocation>
    <subcellularLocation>
        <location evidence="1">Presynapse</location>
    </subcellularLocation>
</comment>
<comment type="domain">
    <text evidence="2">The PDZ domain-binding motif is involved in the interaction with PATJ, CASK, APBA1, DLG1 and DLG4.</text>
</comment>
<comment type="similarity">
    <text evidence="6">Belongs to the G-protein coupled receptor 1 family.</text>
</comment>
<feature type="chain" id="PRO_0000068949" description="5-hydroxytryptamine receptor 2A">
    <location>
        <begin position="1"/>
        <end position="470"/>
    </location>
</feature>
<feature type="topological domain" description="Extracellular" evidence="2">
    <location>
        <begin position="1"/>
        <end position="80"/>
    </location>
</feature>
<feature type="transmembrane region" description="Helical; Name=1" evidence="2">
    <location>
        <begin position="81"/>
        <end position="97"/>
    </location>
</feature>
<feature type="topological domain" description="Cytoplasmic" evidence="2">
    <location>
        <begin position="98"/>
        <end position="111"/>
    </location>
</feature>
<feature type="transmembrane region" description="Helical; Name=2" evidence="2">
    <location>
        <begin position="112"/>
        <end position="137"/>
    </location>
</feature>
<feature type="topological domain" description="Extracellular" evidence="2">
    <location>
        <begin position="138"/>
        <end position="146"/>
    </location>
</feature>
<feature type="transmembrane region" description="Helical; Name=3" evidence="2">
    <location>
        <begin position="147"/>
        <end position="171"/>
    </location>
</feature>
<feature type="topological domain" description="Cytoplasmic" evidence="2">
    <location>
        <begin position="172"/>
        <end position="191"/>
    </location>
</feature>
<feature type="transmembrane region" description="Helical; Name=4" evidence="2">
    <location>
        <begin position="192"/>
        <end position="215"/>
    </location>
</feature>
<feature type="topological domain" description="Extracellular" evidence="2">
    <location>
        <begin position="216"/>
        <end position="232"/>
    </location>
</feature>
<feature type="transmembrane region" description="Helical; Name=5" evidence="2">
    <location>
        <begin position="233"/>
        <end position="258"/>
    </location>
</feature>
<feature type="topological domain" description="Cytoplasmic" evidence="2">
    <location>
        <begin position="259"/>
        <end position="321"/>
    </location>
</feature>
<feature type="transmembrane region" description="Helical; Name=6" evidence="2">
    <location>
        <begin position="322"/>
        <end position="347"/>
    </location>
</feature>
<feature type="topological domain" description="Extracellular" evidence="2">
    <location>
        <begin position="348"/>
        <end position="355"/>
    </location>
</feature>
<feature type="transmembrane region" description="Helical; Name=7" evidence="2">
    <location>
        <begin position="356"/>
        <end position="381"/>
    </location>
</feature>
<feature type="topological domain" description="Cytoplasmic" evidence="2">
    <location>
        <begin position="382"/>
        <end position="470"/>
    </location>
</feature>
<feature type="region of interest" description="Disordered" evidence="7">
    <location>
        <begin position="448"/>
        <end position="470"/>
    </location>
</feature>
<feature type="short sequence motif" description="DRY motif; important for ligand-induced conformation changes" evidence="4">
    <location>
        <begin position="172"/>
        <end position="174"/>
    </location>
</feature>
<feature type="short sequence motif" description="NPxxY motif; important for ligand-induced conformation changes and signaling" evidence="4">
    <location>
        <begin position="375"/>
        <end position="379"/>
    </location>
</feature>
<feature type="short sequence motif" description="PDZ-binding" evidence="2">
    <location>
        <begin position="468"/>
        <end position="470"/>
    </location>
</feature>
<feature type="compositionally biased region" description="Polar residues" evidence="7">
    <location>
        <begin position="458"/>
        <end position="470"/>
    </location>
</feature>
<feature type="binding site" evidence="2">
    <location>
        <position position="155"/>
    </location>
    <ligand>
        <name>serotonin</name>
        <dbReference type="ChEBI" id="CHEBI:350546"/>
    </ligand>
</feature>
<feature type="binding site" evidence="2">
    <location>
        <position position="342"/>
    </location>
    <ligand>
        <name>serotonin</name>
        <dbReference type="ChEBI" id="CHEBI:350546"/>
    </ligand>
</feature>
<feature type="site" description="Hydrophobic barrier that decreases the speed of ligand binding and dissociation" evidence="2">
    <location>
        <position position="229"/>
    </location>
</feature>
<feature type="modified residue" description="Phosphoserine" evidence="2">
    <location>
        <position position="280"/>
    </location>
</feature>
<feature type="glycosylation site" description="N-linked (GlcNAc...) asparagine" evidence="5">
    <location>
        <position position="8"/>
    </location>
</feature>
<feature type="glycosylation site" description="N-linked (GlcNAc...) asparagine" evidence="5">
    <location>
        <position position="38"/>
    </location>
</feature>
<feature type="glycosylation site" description="N-linked (GlcNAc...) asparagine" evidence="5">
    <location>
        <position position="44"/>
    </location>
</feature>
<feature type="glycosylation site" description="N-linked (GlcNAc...) asparagine" evidence="5">
    <location>
        <position position="51"/>
    </location>
</feature>
<feature type="glycosylation site" description="N-linked (GlcNAc...) asparagine" evidence="5">
    <location>
        <position position="54"/>
    </location>
</feature>
<feature type="glycosylation site" description="N-linked (GlcNAc...) asparagine" evidence="5">
    <location>
        <position position="75"/>
    </location>
</feature>
<feature type="disulfide bond" evidence="6">
    <location>
        <begin position="148"/>
        <end position="227"/>
    </location>
</feature>
<feature type="disulfide bond" evidence="6">
    <location>
        <begin position="348"/>
        <end position="352"/>
    </location>
</feature>
<feature type="sequence conflict" description="In Ref. 2; CAA88169." evidence="8" ref="2">
    <original>R</original>
    <variation>S</variation>
    <location>
        <position position="184"/>
    </location>
</feature>
<feature type="sequence conflict" description="In Ref. 2; CAA88169." evidence="8" ref="2">
    <original>M</original>
    <variation>K</variation>
    <location>
        <position position="208"/>
    </location>
</feature>
<sequence>MDVLCEENTSLSSPTNSFMQLNDDTRLYHNDFNSGEANTSDAFNWTVDSENRTNLSCEGCLSPPCFSLLHLQEKNWSALLTAVVIILTIAGNILVIMAVSLEKKLQNATNYFLMSLAIADMLLGFLVMPVSMLTILYGYRWPLPSKLCAVWIYLDVLFSTASIMHLCAISLDRYVAIQNPIHHRRFNSRTKAFLKIIAVWTISVGISMPIPVFGLQDDSKVFKEGSCLLADDNFVLIGSFVSFFIPLTIMVITYFLTIKSLQKEATLCVSDLGTRAKLASFSFLPQSSLSSEKLFQRSIHREPGSYGRRTMQSISNEQKACKVLGIVFFLFVVMWCPFFITNIMAVICKESCNEDVIGALLNVFVWIGYLSSAVNPLVYTLFNKTYRSAFSRYIQCQYKENKKPLQLILVNTIPALAYKSSQLQTGQKENSKQDDKATENDCTMVALGKQHSEDAPADNSNTVNEKVSCV</sequence>
<reference key="1">
    <citation type="journal article" date="1995" name="Biochim. Biophys. Acta">
        <title>Species differences in 5-HT2A receptors: cloned pig and rhesus monkey 5-HT2A receptors reveal conserved transmembrane homology to the human rather than rat sequence.</title>
        <authorList>
            <person name="Johnson M.P."/>
            <person name="Baez M."/>
            <person name="Kursar J.D."/>
            <person name="Nelson D.L."/>
        </authorList>
    </citation>
    <scope>NUCLEOTIDE SEQUENCE [MRNA]</scope>
</reference>
<reference key="2">
    <citation type="journal article" date="1995" name="FEBS Lett.">
        <title>Expression of serotonin receptor mRNAs in blood vessels.</title>
        <authorList>
            <person name="Ullmer C."/>
            <person name="Schmuck K."/>
            <person name="Kalkman H.O."/>
            <person name="Luebbert H."/>
        </authorList>
    </citation>
    <scope>NUCLEOTIDE SEQUENCE [MRNA] OF 146-213</scope>
    <source>
        <tissue>Pulmonary artery</tissue>
    </source>
</reference>
<accession>P50129</accession>
<accession>Q29004</accession>
<name>5HT2A_PIG</name>
<evidence type="ECO:0000250" key="1">
    <source>
        <dbReference type="UniProtKB" id="P14842"/>
    </source>
</evidence>
<evidence type="ECO:0000250" key="2">
    <source>
        <dbReference type="UniProtKB" id="P28223"/>
    </source>
</evidence>
<evidence type="ECO:0000250" key="3">
    <source>
        <dbReference type="UniProtKB" id="P35363"/>
    </source>
</evidence>
<evidence type="ECO:0000250" key="4">
    <source>
        <dbReference type="UniProtKB" id="P41595"/>
    </source>
</evidence>
<evidence type="ECO:0000255" key="5"/>
<evidence type="ECO:0000255" key="6">
    <source>
        <dbReference type="PROSITE-ProRule" id="PRU00521"/>
    </source>
</evidence>
<evidence type="ECO:0000256" key="7">
    <source>
        <dbReference type="SAM" id="MobiDB-lite"/>
    </source>
</evidence>
<evidence type="ECO:0000305" key="8"/>
<gene>
    <name type="primary">HTR2A</name>
</gene>